<accession>O67149</accession>
<comment type="function">
    <text evidence="1">Destroys radicals which are normally produced within the cells and which are toxic to biological systems.</text>
</comment>
<comment type="catalytic activity">
    <reaction>
        <text>2 superoxide + 2 H(+) = H2O2 + O2</text>
        <dbReference type="Rhea" id="RHEA:20696"/>
        <dbReference type="ChEBI" id="CHEBI:15378"/>
        <dbReference type="ChEBI" id="CHEBI:15379"/>
        <dbReference type="ChEBI" id="CHEBI:16240"/>
        <dbReference type="ChEBI" id="CHEBI:18421"/>
        <dbReference type="EC" id="1.15.1.1"/>
    </reaction>
</comment>
<comment type="cofactor">
    <cofactor evidence="1">
        <name>Cu cation</name>
        <dbReference type="ChEBI" id="CHEBI:23378"/>
    </cofactor>
    <text evidence="1">Binds 1 copper ion per subunit.</text>
</comment>
<comment type="cofactor">
    <cofactor evidence="1">
        <name>Zn(2+)</name>
        <dbReference type="ChEBI" id="CHEBI:29105"/>
    </cofactor>
    <text evidence="1">Binds 1 zinc ion per subunit.</text>
</comment>
<comment type="similarity">
    <text evidence="3">Belongs to the Cu-Zn superoxide dismutase family.</text>
</comment>
<protein>
    <recommendedName>
        <fullName>Superoxide dismutase [Cu-Zn] 1</fullName>
        <ecNumber>1.15.1.1</ecNumber>
    </recommendedName>
</protein>
<dbReference type="EC" id="1.15.1.1"/>
<dbReference type="EMBL" id="AE000657">
    <property type="protein sequence ID" value="AAC07105.1"/>
    <property type="molecule type" value="Genomic_DNA"/>
</dbReference>
<dbReference type="PIR" id="B70390">
    <property type="entry name" value="B70390"/>
</dbReference>
<dbReference type="RefSeq" id="NP_213712.1">
    <property type="nucleotide sequence ID" value="NC_000918.1"/>
</dbReference>
<dbReference type="RefSeq" id="WP_010880650.1">
    <property type="nucleotide sequence ID" value="NC_000918.1"/>
</dbReference>
<dbReference type="SMR" id="O67149"/>
<dbReference type="FunCoup" id="O67149">
    <property type="interactions" value="42"/>
</dbReference>
<dbReference type="STRING" id="224324.aq_1050"/>
<dbReference type="EnsemblBacteria" id="AAC07105">
    <property type="protein sequence ID" value="AAC07105"/>
    <property type="gene ID" value="aq_1050"/>
</dbReference>
<dbReference type="KEGG" id="aae:aq_1050"/>
<dbReference type="PATRIC" id="fig|224324.8.peg.813"/>
<dbReference type="eggNOG" id="COG2032">
    <property type="taxonomic scope" value="Bacteria"/>
</dbReference>
<dbReference type="HOGENOM" id="CLU_056632_8_1_0"/>
<dbReference type="InParanoid" id="O67149"/>
<dbReference type="OrthoDB" id="9792957at2"/>
<dbReference type="Proteomes" id="UP000000798">
    <property type="component" value="Chromosome"/>
</dbReference>
<dbReference type="GO" id="GO:0005507">
    <property type="term" value="F:copper ion binding"/>
    <property type="evidence" value="ECO:0000318"/>
    <property type="project" value="GO_Central"/>
</dbReference>
<dbReference type="GO" id="GO:0004784">
    <property type="term" value="F:superoxide dismutase activity"/>
    <property type="evidence" value="ECO:0000318"/>
    <property type="project" value="GO_Central"/>
</dbReference>
<dbReference type="GO" id="GO:0019430">
    <property type="term" value="P:removal of superoxide radicals"/>
    <property type="evidence" value="ECO:0000318"/>
    <property type="project" value="GO_Central"/>
</dbReference>
<dbReference type="CDD" id="cd00305">
    <property type="entry name" value="Cu-Zn_Superoxide_Dismutase"/>
    <property type="match status" value="1"/>
</dbReference>
<dbReference type="FunFam" id="2.60.40.200:FF:000005">
    <property type="entry name" value="Superoxide dismutase [Cu-Zn]"/>
    <property type="match status" value="1"/>
</dbReference>
<dbReference type="Gene3D" id="2.60.40.200">
    <property type="entry name" value="Superoxide dismutase, copper/zinc binding domain"/>
    <property type="match status" value="1"/>
</dbReference>
<dbReference type="InterPro" id="IPR036423">
    <property type="entry name" value="SOD-like_Cu/Zn_dom_sf"/>
</dbReference>
<dbReference type="InterPro" id="IPR024134">
    <property type="entry name" value="SOD_Cu/Zn_/chaperone"/>
</dbReference>
<dbReference type="InterPro" id="IPR018152">
    <property type="entry name" value="SOD_Cu/Zn_BS"/>
</dbReference>
<dbReference type="InterPro" id="IPR001424">
    <property type="entry name" value="SOD_Cu_Zn_dom"/>
</dbReference>
<dbReference type="PANTHER" id="PTHR10003">
    <property type="entry name" value="SUPEROXIDE DISMUTASE CU-ZN -RELATED"/>
    <property type="match status" value="1"/>
</dbReference>
<dbReference type="Pfam" id="PF00080">
    <property type="entry name" value="Sod_Cu"/>
    <property type="match status" value="1"/>
</dbReference>
<dbReference type="SUPFAM" id="SSF49329">
    <property type="entry name" value="Cu,Zn superoxide dismutase-like"/>
    <property type="match status" value="1"/>
</dbReference>
<dbReference type="PROSITE" id="PS00332">
    <property type="entry name" value="SOD_CU_ZN_2"/>
    <property type="match status" value="1"/>
</dbReference>
<name>SODC1_AQUAE</name>
<reference key="1">
    <citation type="journal article" date="1998" name="Nature">
        <title>The complete genome of the hyperthermophilic bacterium Aquifex aeolicus.</title>
        <authorList>
            <person name="Deckert G."/>
            <person name="Warren P.V."/>
            <person name="Gaasterland T."/>
            <person name="Young W.G."/>
            <person name="Lenox A.L."/>
            <person name="Graham D.E."/>
            <person name="Overbeek R."/>
            <person name="Snead M.A."/>
            <person name="Keller M."/>
            <person name="Aujay M."/>
            <person name="Huber R."/>
            <person name="Feldman R.A."/>
            <person name="Short J.M."/>
            <person name="Olsen G.J."/>
            <person name="Swanson R.V."/>
        </authorList>
    </citation>
    <scope>NUCLEOTIDE SEQUENCE [LARGE SCALE GENOMIC DNA]</scope>
    <source>
        <strain>VF5</strain>
    </source>
</reference>
<feature type="signal peptide" evidence="2">
    <location>
        <begin position="1"/>
        <end position="18"/>
    </location>
</feature>
<feature type="chain" id="PRO_0000032818" description="Superoxide dismutase [Cu-Zn] 1">
    <location>
        <begin position="19"/>
        <end position="169"/>
    </location>
</feature>
<feature type="binding site" evidence="1">
    <location>
        <position position="65"/>
    </location>
    <ligand>
        <name>Cu cation</name>
        <dbReference type="ChEBI" id="CHEBI:23378"/>
        <note>catalytic</note>
    </ligand>
</feature>
<feature type="binding site" evidence="1">
    <location>
        <position position="67"/>
    </location>
    <ligand>
        <name>Cu cation</name>
        <dbReference type="ChEBI" id="CHEBI:23378"/>
        <note>catalytic</note>
    </ligand>
</feature>
<feature type="binding site" evidence="1">
    <location>
        <position position="83"/>
    </location>
    <ligand>
        <name>Cu cation</name>
        <dbReference type="ChEBI" id="CHEBI:23378"/>
        <note>catalytic</note>
    </ligand>
</feature>
<feature type="binding site" evidence="1">
    <location>
        <position position="83"/>
    </location>
    <ligand>
        <name>Zn(2+)</name>
        <dbReference type="ChEBI" id="CHEBI:29105"/>
        <note>structural</note>
    </ligand>
</feature>
<feature type="binding site" evidence="1">
    <location>
        <position position="91"/>
    </location>
    <ligand>
        <name>Zn(2+)</name>
        <dbReference type="ChEBI" id="CHEBI:29105"/>
        <note>structural</note>
    </ligand>
</feature>
<feature type="binding site" evidence="1">
    <location>
        <position position="100"/>
    </location>
    <ligand>
        <name>Zn(2+)</name>
        <dbReference type="ChEBI" id="CHEBI:29105"/>
        <note>structural</note>
    </ligand>
</feature>
<feature type="binding site" evidence="1">
    <location>
        <position position="103"/>
    </location>
    <ligand>
        <name>Zn(2+)</name>
        <dbReference type="ChEBI" id="CHEBI:29105"/>
        <note>structural</note>
    </ligand>
</feature>
<feature type="binding site" evidence="1">
    <location>
        <position position="145"/>
    </location>
    <ligand>
        <name>Cu cation</name>
        <dbReference type="ChEBI" id="CHEBI:23378"/>
        <note>catalytic</note>
    </ligand>
</feature>
<feature type="disulfide bond" evidence="1">
    <location>
        <begin position="72"/>
        <end position="165"/>
    </location>
</feature>
<gene>
    <name type="primary">sodC1</name>
    <name type="ordered locus">aq_1050</name>
</gene>
<organism>
    <name type="scientific">Aquifex aeolicus (strain VF5)</name>
    <dbReference type="NCBI Taxonomy" id="224324"/>
    <lineage>
        <taxon>Bacteria</taxon>
        <taxon>Pseudomonadati</taxon>
        <taxon>Aquificota</taxon>
        <taxon>Aquificia</taxon>
        <taxon>Aquificales</taxon>
        <taxon>Aquificaceae</taxon>
        <taxon>Aquifex</taxon>
    </lineage>
</organism>
<evidence type="ECO:0000250" key="1"/>
<evidence type="ECO:0000255" key="2"/>
<evidence type="ECO:0000305" key="3"/>
<sequence length="169" mass="18301">MFEQWDALCAVLFSFSIAQELKTHADIVNQKGEKIGKAELIQTNSGVLIKLEASNLPPNAELAFHIHELGKCDPPDFKSAKGHFNPFKKKHGLLNPEGPHAGDMPNIHTDDKGNVRVQVLNPFVTLKKGKKNSLFKEGGTALVIHGGPDDYKSDPAGNAGKRIACGVVK</sequence>
<keyword id="KW-0049">Antioxidant</keyword>
<keyword id="KW-0186">Copper</keyword>
<keyword id="KW-1015">Disulfide bond</keyword>
<keyword id="KW-0479">Metal-binding</keyword>
<keyword id="KW-0560">Oxidoreductase</keyword>
<keyword id="KW-1185">Reference proteome</keyword>
<keyword id="KW-0732">Signal</keyword>
<keyword id="KW-0862">Zinc</keyword>
<proteinExistence type="inferred from homology"/>